<sequence length="228" mass="25726">MTDETEEDDTTQQRSSRNDGVSKNKGKGFKGDKAKRALIGAGGRILFYPTLLYNLVRFKLQSQFRWWDQIDEYLLMGAVPFRKDVPRLKKLGVGGVITLNEPYETLVPSSLYSAYEMEHLVIPTRDYLFAPSIVDITLAVNFIHKNALLGKTTYVHCKAGRGRSTTVVLCYLIEHKSMTVAAAFEHVRSIRPRVLLHPSQRKVVEEFSRLQSPLSESTFIATSGDIVS</sequence>
<accession>Q6NKR2</accession>
<accession>F4K7Q7</accession>
<accession>Q9FJU7</accession>
<feature type="chain" id="PRO_0000449815" description="Phosphatidylglycerophosphate phosphatase PTPMT2">
    <location>
        <begin position="1"/>
        <end position="228"/>
    </location>
</feature>
<feature type="domain" description="Tyrosine-protein phosphatase" evidence="3">
    <location>
        <begin position="66"/>
        <end position="213"/>
    </location>
</feature>
<feature type="region of interest" description="Disordered" evidence="5">
    <location>
        <begin position="1"/>
        <end position="30"/>
    </location>
</feature>
<feature type="short sequence motif" description="Glucan phosphatase signature motif CXAGXGR" evidence="2">
    <location>
        <begin position="157"/>
        <end position="163"/>
    </location>
</feature>
<feature type="compositionally biased region" description="Acidic residues" evidence="5">
    <location>
        <begin position="1"/>
        <end position="10"/>
    </location>
</feature>
<feature type="active site" description="Phosphocysteine intermediate" evidence="3">
    <location>
        <position position="157"/>
    </location>
</feature>
<feature type="binding site" evidence="2">
    <location>
        <position position="48"/>
    </location>
    <ligand>
        <name>substrate</name>
    </ligand>
</feature>
<feature type="binding site" evidence="2">
    <location>
        <position position="126"/>
    </location>
    <ligand>
        <name>substrate</name>
    </ligand>
</feature>
<feature type="binding site" evidence="2">
    <location>
        <begin position="158"/>
        <end position="163"/>
    </location>
    <ligand>
        <name>substrate</name>
    </ligand>
</feature>
<feature type="splice variant" id="VSP_060573" description="In isoform 2.">
    <location>
        <begin position="73"/>
        <end position="113"/>
    </location>
</feature>
<organism>
    <name type="scientific">Arabidopsis thaliana</name>
    <name type="common">Mouse-ear cress</name>
    <dbReference type="NCBI Taxonomy" id="3702"/>
    <lineage>
        <taxon>Eukaryota</taxon>
        <taxon>Viridiplantae</taxon>
        <taxon>Streptophyta</taxon>
        <taxon>Embryophyta</taxon>
        <taxon>Tracheophyta</taxon>
        <taxon>Spermatophyta</taxon>
        <taxon>Magnoliopsida</taxon>
        <taxon>eudicotyledons</taxon>
        <taxon>Gunneridae</taxon>
        <taxon>Pentapetalae</taxon>
        <taxon>rosids</taxon>
        <taxon>malvids</taxon>
        <taxon>Brassicales</taxon>
        <taxon>Brassicaceae</taxon>
        <taxon>Camelineae</taxon>
        <taxon>Arabidopsis</taxon>
    </lineage>
</organism>
<reference key="1">
    <citation type="submission" date="2009-01" db="EMBL/GenBank/DDBJ databases">
        <authorList>
            <person name="Gao Z."/>
            <person name="Zhang J."/>
            <person name="Jia W."/>
        </authorList>
    </citation>
    <scope>NUCLEOTIDE SEQUENCE [GENOMIC DNA]</scope>
</reference>
<reference key="2">
    <citation type="journal article" date="1998" name="DNA Res.">
        <title>Structural analysis of Arabidopsis thaliana chromosome 5. VI. Sequence features of the regions of 1,367,185 bp covered by 19 physically assigned P1 and TAC clones.</title>
        <authorList>
            <person name="Kotani H."/>
            <person name="Nakamura Y."/>
            <person name="Sato S."/>
            <person name="Asamizu E."/>
            <person name="Kaneko T."/>
            <person name="Miyajima N."/>
            <person name="Tabata S."/>
        </authorList>
    </citation>
    <scope>NUCLEOTIDE SEQUENCE [LARGE SCALE GENOMIC DNA]</scope>
    <source>
        <strain>cv. Columbia</strain>
    </source>
</reference>
<reference key="3">
    <citation type="journal article" date="2017" name="Plant J.">
        <title>Araport11: a complete reannotation of the Arabidopsis thaliana reference genome.</title>
        <authorList>
            <person name="Cheng C.Y."/>
            <person name="Krishnakumar V."/>
            <person name="Chan A.P."/>
            <person name="Thibaud-Nissen F."/>
            <person name="Schobel S."/>
            <person name="Town C.D."/>
        </authorList>
    </citation>
    <scope>GENOME REANNOTATION</scope>
    <source>
        <strain>cv. Columbia</strain>
    </source>
</reference>
<reference key="4">
    <citation type="submission" date="2004-05" db="EMBL/GenBank/DDBJ databases">
        <title>Arabidopsis ORF clones.</title>
        <authorList>
            <person name="Shinn P."/>
            <person name="Chen H."/>
            <person name="Cheuk R.F."/>
            <person name="Kim C.J."/>
            <person name="Carninci P."/>
            <person name="Hayashizaki Y."/>
            <person name="Ishida J."/>
            <person name="Kamiya A."/>
            <person name="Kawai J."/>
            <person name="Narusaka M."/>
            <person name="Sakurai T."/>
            <person name="Satou M."/>
            <person name="Seki M."/>
            <person name="Shinozaki K."/>
            <person name="Ecker J.R."/>
        </authorList>
    </citation>
    <scope>NUCLEOTIDE SEQUENCE [LARGE SCALE MRNA] (ISOFORM 1)</scope>
    <source>
        <strain>cv. Columbia</strain>
    </source>
</reference>
<reference key="5">
    <citation type="submission" date="2005-03" db="EMBL/GenBank/DDBJ databases">
        <title>Large-scale analysis of RIKEN Arabidopsis full-length (RAFL) cDNAs.</title>
        <authorList>
            <person name="Totoki Y."/>
            <person name="Seki M."/>
            <person name="Ishida J."/>
            <person name="Nakajima M."/>
            <person name="Enju A."/>
            <person name="Kamiya A."/>
            <person name="Narusaka M."/>
            <person name="Shin-i T."/>
            <person name="Nakagawa M."/>
            <person name="Sakamoto N."/>
            <person name="Oishi K."/>
            <person name="Kohara Y."/>
            <person name="Kobayashi M."/>
            <person name="Toyoda A."/>
            <person name="Sakaki Y."/>
            <person name="Sakurai T."/>
            <person name="Iida K."/>
            <person name="Akiyama K."/>
            <person name="Satou M."/>
            <person name="Toyoda T."/>
            <person name="Konagaya A."/>
            <person name="Carninci P."/>
            <person name="Kawai J."/>
            <person name="Hayashizaki Y."/>
            <person name="Shinozaki K."/>
        </authorList>
    </citation>
    <scope>NUCLEOTIDE SEQUENCE [LARGE SCALE MRNA] (ISOFORM 1)</scope>
    <source>
        <strain>cv. Columbia</strain>
    </source>
</reference>
<reference key="6">
    <citation type="journal article" date="2018" name="Biochim. Biophys. Acta">
        <title>Phosphatidylglycerophosphate phosphatase is required for root growth in Arabidopsis.</title>
        <authorList>
            <person name="Lin Y.-C."/>
            <person name="Kobayashi K."/>
            <person name="Wada H."/>
            <person name="Nakamura Y."/>
        </authorList>
    </citation>
    <scope>FUNCTION</scope>
    <scope>DISRUPTION PHENOTYPE</scope>
    <scope>CATALYTIC ACTIVITY</scope>
    <scope>TISSUE SPECIFICITY</scope>
    <scope>PATHWAY</scope>
    <source>
        <strain>cv. Columbia</strain>
    </source>
</reference>
<protein>
    <recommendedName>
        <fullName evidence="7">Phosphatidylglycerophosphate phosphatase PTPMT2</fullName>
        <ecNumber evidence="10">3.1.3.27</ecNumber>
    </recommendedName>
    <alternativeName>
        <fullName evidence="7">Protein TYROSINE PHOSPHATASE LOCALIZED TO THE MITOCHONDRION 2</fullName>
    </alternativeName>
    <alternativeName>
        <fullName evidence="9">Putative dual specificity protein phosphatase PTPMT2</fullName>
        <ecNumber evidence="1">3.1.3.16</ecNumber>
        <ecNumber evidence="4">3.1.3.48</ecNumber>
    </alternativeName>
</protein>
<dbReference type="EC" id="3.1.3.27" evidence="10"/>
<dbReference type="EC" id="3.1.3.16" evidence="1"/>
<dbReference type="EC" id="3.1.3.48" evidence="4"/>
<dbReference type="EMBL" id="FJ605096">
    <property type="protein sequence ID" value="ACU43460.1"/>
    <property type="molecule type" value="Genomic_DNA"/>
</dbReference>
<dbReference type="EMBL" id="AB013392">
    <property type="protein sequence ID" value="BAB09879.1"/>
    <property type="status" value="ALT_SEQ"/>
    <property type="molecule type" value="Genomic_DNA"/>
</dbReference>
<dbReference type="EMBL" id="CP002688">
    <property type="protein sequence ID" value="AED96787.1"/>
    <property type="molecule type" value="Genomic_DNA"/>
</dbReference>
<dbReference type="EMBL" id="CP002688">
    <property type="protein sequence ID" value="AED96788.1"/>
    <property type="molecule type" value="Genomic_DNA"/>
</dbReference>
<dbReference type="EMBL" id="BT012631">
    <property type="protein sequence ID" value="AAT06450.1"/>
    <property type="molecule type" value="mRNA"/>
</dbReference>
<dbReference type="EMBL" id="AK221735">
    <property type="protein sequence ID" value="BAD93755.1"/>
    <property type="molecule type" value="mRNA"/>
</dbReference>
<dbReference type="RefSeq" id="NP_001032084.1">
    <molecule id="Q6NKR2-2"/>
    <property type="nucleotide sequence ID" value="NM_001037007.1"/>
</dbReference>
<dbReference type="RefSeq" id="NP_200472.2">
    <molecule id="Q6NKR2-1"/>
    <property type="nucleotide sequence ID" value="NM_125044.4"/>
</dbReference>
<dbReference type="SMR" id="Q6NKR2"/>
<dbReference type="FunCoup" id="Q6NKR2">
    <property type="interactions" value="545"/>
</dbReference>
<dbReference type="STRING" id="3702.Q6NKR2"/>
<dbReference type="PaxDb" id="3702-AT5G56610.1"/>
<dbReference type="ProteomicsDB" id="181061">
    <molecule id="Q6NKR2-1"/>
</dbReference>
<dbReference type="ProteomicsDB" id="228499"/>
<dbReference type="EnsemblPlants" id="AT5G56610.1">
    <molecule id="Q6NKR2-1"/>
    <property type="protein sequence ID" value="AT5G56610.1"/>
    <property type="gene ID" value="AT5G56610"/>
</dbReference>
<dbReference type="EnsemblPlants" id="AT5G56610.2">
    <molecule id="Q6NKR2-2"/>
    <property type="protein sequence ID" value="AT5G56610.2"/>
    <property type="gene ID" value="AT5G56610"/>
</dbReference>
<dbReference type="GeneID" id="835762"/>
<dbReference type="Gramene" id="AT5G56610.1">
    <molecule id="Q6NKR2-1"/>
    <property type="protein sequence ID" value="AT5G56610.1"/>
    <property type="gene ID" value="AT5G56610"/>
</dbReference>
<dbReference type="Gramene" id="AT5G56610.2">
    <molecule id="Q6NKR2-2"/>
    <property type="protein sequence ID" value="AT5G56610.2"/>
    <property type="gene ID" value="AT5G56610"/>
</dbReference>
<dbReference type="KEGG" id="ath:AT5G56610"/>
<dbReference type="Araport" id="AT5G56610"/>
<dbReference type="TAIR" id="AT5G56610">
    <property type="gene designation" value="PTPMT2"/>
</dbReference>
<dbReference type="eggNOG" id="KOG1719">
    <property type="taxonomic scope" value="Eukaryota"/>
</dbReference>
<dbReference type="HOGENOM" id="CLU_047330_0_1_1"/>
<dbReference type="InParanoid" id="Q6NKR2"/>
<dbReference type="OMA" id="CCSPEEW"/>
<dbReference type="PhylomeDB" id="Q6NKR2"/>
<dbReference type="BRENDA" id="3.1.3.27">
    <property type="organism ID" value="399"/>
</dbReference>
<dbReference type="UniPathway" id="UPA00084">
    <property type="reaction ID" value="UER00504"/>
</dbReference>
<dbReference type="PRO" id="PR:Q6NKR2"/>
<dbReference type="Proteomes" id="UP000006548">
    <property type="component" value="Chromosome 5"/>
</dbReference>
<dbReference type="ExpressionAtlas" id="Q6NKR2">
    <property type="expression patterns" value="baseline and differential"/>
</dbReference>
<dbReference type="GO" id="GO:0008962">
    <property type="term" value="F:phosphatidylglycerophosphatase activity"/>
    <property type="evidence" value="ECO:0000314"/>
    <property type="project" value="TAIR"/>
</dbReference>
<dbReference type="GO" id="GO:0004722">
    <property type="term" value="F:protein serine/threonine phosphatase activity"/>
    <property type="evidence" value="ECO:0007669"/>
    <property type="project" value="UniProtKB-EC"/>
</dbReference>
<dbReference type="GO" id="GO:0004725">
    <property type="term" value="F:protein tyrosine phosphatase activity"/>
    <property type="evidence" value="ECO:0007669"/>
    <property type="project" value="UniProtKB-EC"/>
</dbReference>
<dbReference type="GO" id="GO:0006655">
    <property type="term" value="P:phosphatidylglycerol biosynthetic process"/>
    <property type="evidence" value="ECO:0007669"/>
    <property type="project" value="UniProtKB-UniPathway"/>
</dbReference>
<dbReference type="GO" id="GO:0048364">
    <property type="term" value="P:root development"/>
    <property type="evidence" value="ECO:0000315"/>
    <property type="project" value="UniProtKB"/>
</dbReference>
<dbReference type="CDD" id="cd14524">
    <property type="entry name" value="PTPMT1"/>
    <property type="match status" value="1"/>
</dbReference>
<dbReference type="FunFam" id="3.90.190.10:FF:000051">
    <property type="entry name" value="Dual specificity phosphatase domain protein"/>
    <property type="match status" value="1"/>
</dbReference>
<dbReference type="Gene3D" id="3.90.190.10">
    <property type="entry name" value="Protein tyrosine phosphatase superfamily"/>
    <property type="match status" value="1"/>
</dbReference>
<dbReference type="InterPro" id="IPR000340">
    <property type="entry name" value="Dual-sp_phosphatase_cat-dom"/>
</dbReference>
<dbReference type="InterPro" id="IPR029021">
    <property type="entry name" value="Prot-tyrosine_phosphatase-like"/>
</dbReference>
<dbReference type="InterPro" id="IPR044596">
    <property type="entry name" value="PTPMT1-like"/>
</dbReference>
<dbReference type="InterPro" id="IPR016130">
    <property type="entry name" value="Tyr_Pase_AS"/>
</dbReference>
<dbReference type="InterPro" id="IPR000387">
    <property type="entry name" value="Tyr_Pase_dom"/>
</dbReference>
<dbReference type="InterPro" id="IPR020422">
    <property type="entry name" value="TYR_PHOSPHATASE_DUAL_dom"/>
</dbReference>
<dbReference type="PANTHER" id="PTHR46274">
    <property type="entry name" value="PHOSPHATIDYLINOSITOL PHOSPHATASE"/>
    <property type="match status" value="1"/>
</dbReference>
<dbReference type="PANTHER" id="PTHR46274:SF6">
    <property type="entry name" value="TYR_PHOSPHATASE_2 DOMAIN-CONTAINING PROTEIN"/>
    <property type="match status" value="1"/>
</dbReference>
<dbReference type="Pfam" id="PF00782">
    <property type="entry name" value="DSPc"/>
    <property type="match status" value="1"/>
</dbReference>
<dbReference type="SMART" id="SM00195">
    <property type="entry name" value="DSPc"/>
    <property type="match status" value="1"/>
</dbReference>
<dbReference type="SUPFAM" id="SSF52799">
    <property type="entry name" value="(Phosphotyrosine protein) phosphatases II"/>
    <property type="match status" value="1"/>
</dbReference>
<dbReference type="PROSITE" id="PS00383">
    <property type="entry name" value="TYR_PHOSPHATASE_1"/>
    <property type="match status" value="1"/>
</dbReference>
<dbReference type="PROSITE" id="PS50056">
    <property type="entry name" value="TYR_PHOSPHATASE_2"/>
    <property type="match status" value="1"/>
</dbReference>
<dbReference type="PROSITE" id="PS50054">
    <property type="entry name" value="TYR_PHOSPHATASE_DUAL"/>
    <property type="match status" value="1"/>
</dbReference>
<evidence type="ECO:0000250" key="1">
    <source>
        <dbReference type="UniProtKB" id="P0C089"/>
    </source>
</evidence>
<evidence type="ECO:0000250" key="2">
    <source>
        <dbReference type="UniProtKB" id="Q9FEB5"/>
    </source>
</evidence>
<evidence type="ECO:0000255" key="3">
    <source>
        <dbReference type="PROSITE-ProRule" id="PRU00160"/>
    </source>
</evidence>
<evidence type="ECO:0000255" key="4">
    <source>
        <dbReference type="PROSITE-ProRule" id="PRU10044"/>
    </source>
</evidence>
<evidence type="ECO:0000256" key="5">
    <source>
        <dbReference type="SAM" id="MobiDB-lite"/>
    </source>
</evidence>
<evidence type="ECO:0000269" key="6">
    <source>
    </source>
</evidence>
<evidence type="ECO:0000303" key="7">
    <source>
    </source>
</evidence>
<evidence type="ECO:0000303" key="8">
    <source ref="1"/>
</evidence>
<evidence type="ECO:0000305" key="9"/>
<evidence type="ECO:0000305" key="10">
    <source>
    </source>
</evidence>
<evidence type="ECO:0000312" key="11">
    <source>
        <dbReference type="Araport" id="AT5G56610"/>
    </source>
</evidence>
<evidence type="ECO:0000312" key="12">
    <source>
        <dbReference type="EMBL" id="AED96787.1"/>
    </source>
</evidence>
<evidence type="ECO:0000312" key="13">
    <source>
        <dbReference type="EMBL" id="BAB09879.1"/>
    </source>
</evidence>
<name>TPMT2_ARATH</name>
<proteinExistence type="evidence at protein level"/>
<comment type="function">
    <text evidence="1 6">Exhibits phosphatidylglycerophosphate phosphatase activity (PubMed:29476828). Involved in root growth and columella cells organization (PubMed:29476828). May possess protein phosphatase activity (By similarity).</text>
</comment>
<comment type="catalytic activity">
    <reaction evidence="1">
        <text>O-phospho-L-seryl-[protein] + H2O = L-seryl-[protein] + phosphate</text>
        <dbReference type="Rhea" id="RHEA:20629"/>
        <dbReference type="Rhea" id="RHEA-COMP:9863"/>
        <dbReference type="Rhea" id="RHEA-COMP:11604"/>
        <dbReference type="ChEBI" id="CHEBI:15377"/>
        <dbReference type="ChEBI" id="CHEBI:29999"/>
        <dbReference type="ChEBI" id="CHEBI:43474"/>
        <dbReference type="ChEBI" id="CHEBI:83421"/>
        <dbReference type="EC" id="3.1.3.16"/>
    </reaction>
</comment>
<comment type="catalytic activity">
    <reaction evidence="1">
        <text>O-phospho-L-threonyl-[protein] + H2O = L-threonyl-[protein] + phosphate</text>
        <dbReference type="Rhea" id="RHEA:47004"/>
        <dbReference type="Rhea" id="RHEA-COMP:11060"/>
        <dbReference type="Rhea" id="RHEA-COMP:11605"/>
        <dbReference type="ChEBI" id="CHEBI:15377"/>
        <dbReference type="ChEBI" id="CHEBI:30013"/>
        <dbReference type="ChEBI" id="CHEBI:43474"/>
        <dbReference type="ChEBI" id="CHEBI:61977"/>
        <dbReference type="EC" id="3.1.3.16"/>
    </reaction>
</comment>
<comment type="catalytic activity">
    <reaction evidence="4">
        <text>O-phospho-L-tyrosyl-[protein] + H2O = L-tyrosyl-[protein] + phosphate</text>
        <dbReference type="Rhea" id="RHEA:10684"/>
        <dbReference type="Rhea" id="RHEA-COMP:10136"/>
        <dbReference type="Rhea" id="RHEA-COMP:20101"/>
        <dbReference type="ChEBI" id="CHEBI:15377"/>
        <dbReference type="ChEBI" id="CHEBI:43474"/>
        <dbReference type="ChEBI" id="CHEBI:46858"/>
        <dbReference type="ChEBI" id="CHEBI:61978"/>
        <dbReference type="EC" id="3.1.3.48"/>
    </reaction>
</comment>
<comment type="catalytic activity">
    <reaction evidence="10">
        <text>a 1,2-diacyl-sn-glycero-3-phospho-(1'-sn-glycero-3'-phosphate) + H2O = a 1,2-diacyl-sn-glycero-3-phospho-(1'-sn-glycerol) + phosphate</text>
        <dbReference type="Rhea" id="RHEA:33751"/>
        <dbReference type="ChEBI" id="CHEBI:15377"/>
        <dbReference type="ChEBI" id="CHEBI:43474"/>
        <dbReference type="ChEBI" id="CHEBI:60110"/>
        <dbReference type="ChEBI" id="CHEBI:64716"/>
        <dbReference type="EC" id="3.1.3.27"/>
    </reaction>
    <physiologicalReaction direction="left-to-right" evidence="10">
        <dbReference type="Rhea" id="RHEA:33752"/>
    </physiologicalReaction>
</comment>
<comment type="pathway">
    <text evidence="10">Phospholipid metabolism; phosphatidylglycerol biosynthesis; phosphatidylglycerol from CDP-diacylglycerol: step 2/2.</text>
</comment>
<comment type="alternative products">
    <event type="alternative splicing"/>
    <isoform>
        <id>Q6NKR2-1</id>
        <name>1</name>
        <name evidence="7">PTPMT2.1</name>
        <sequence type="displayed"/>
    </isoform>
    <isoform>
        <id>Q6NKR2-2</id>
        <name>2</name>
        <name evidence="7">PTPMT2.2</name>
        <sequence type="described" ref="VSP_060573"/>
    </isoform>
</comment>
<comment type="tissue specificity">
    <molecule>Isoform 1</molecule>
    <text evidence="6">Expressed in roots, leaves, stems and flowers.</text>
</comment>
<comment type="tissue specificity">
    <molecule>Isoform 2</molecule>
    <text evidence="6">Expressed at low levels in stems and flowers.</text>
</comment>
<comment type="disruption phenotype">
    <text evidence="6">No visible phenotype in the double mutant ptpmt1-1 ptpmt2-1 (PubMed:29476828). But plants lacking PTPMT1, PTPMT2 and PGPP1 have strongly shorter roots associated with a defective order of columella cells in the root apices, with stronger effect than in the single mutant pgpp1-1 (PubMed:29476828).</text>
</comment>
<comment type="similarity">
    <text evidence="9">Belongs to the protein-tyrosine phosphatase family. Non-receptor class dual specificity subfamily.</text>
</comment>
<comment type="sequence caution" evidence="9">
    <conflict type="erroneous gene model prediction">
        <sequence resource="EMBL-CDS" id="BAB09879"/>
    </conflict>
</comment>
<keyword id="KW-0025">Alternative splicing</keyword>
<keyword id="KW-0378">Hydrolase</keyword>
<keyword id="KW-0444">Lipid biosynthesis</keyword>
<keyword id="KW-0443">Lipid metabolism</keyword>
<keyword id="KW-0594">Phospholipid biosynthesis</keyword>
<keyword id="KW-1208">Phospholipid metabolism</keyword>
<keyword id="KW-0904">Protein phosphatase</keyword>
<keyword id="KW-1185">Reference proteome</keyword>
<gene>
    <name evidence="12" type="primary">PTPMT2</name>
    <name evidence="8" type="synonym">PTP133</name>
    <name evidence="11" type="ordered locus">At5g56610</name>
    <name evidence="13" type="ORF">MIK19.6</name>
</gene>